<sequence length="435" mass="47887">MNDTTSKECPSGPSAWSIASQWVDPGAQSAPWWKLIGSQLCLLAQEARYPIEKQFEILLFLYAKVLPRVGPLNKGEKFNSPSRYTSLLTDDGTPFEYSWKWNNSTSSPDIRYCIEAIGSHTGSSTDPYNYLETEKLLTQDLASCVPGLDLTWFHHFVKAFGIDQRQMASNNPDAPKANMFVAFEHVQKGVVVKAYFLPAAEAGSGGPPTFETFASATRGVLNNTAALDASLDFVKNNEMGIDLVPDMLAVDCVDPNKSRLKLYVSTTATSFASIVSVMTLGGKITDVDRGIKELEVLLSFALGKETPISRDDELNVQSVFDKGLAHDFDLYGRMTYYFDIAPSSKLPDVKLYIPVIRFGRSDEAVASGLGQYLRLRQRDQFHDGFMRALGSIGAGHPEGSGHRLQTYLAVAFQRDGSLAITSYINPGVYHDDLKG</sequence>
<dbReference type="EC" id="2.5.1.-" evidence="5"/>
<dbReference type="EMBL" id="BK013344">
    <property type="protein sequence ID" value="DAD54580.1"/>
    <property type="molecule type" value="Genomic_DNA"/>
</dbReference>
<dbReference type="SMR" id="A0A823A8X6"/>
<dbReference type="GO" id="GO:0004659">
    <property type="term" value="F:prenyltransferase activity"/>
    <property type="evidence" value="ECO:0007669"/>
    <property type="project" value="UniProtKB-KW"/>
</dbReference>
<dbReference type="GO" id="GO:0009820">
    <property type="term" value="P:alkaloid metabolic process"/>
    <property type="evidence" value="ECO:0007669"/>
    <property type="project" value="InterPro"/>
</dbReference>
<dbReference type="CDD" id="cd13929">
    <property type="entry name" value="PT-DMATS_CymD"/>
    <property type="match status" value="1"/>
</dbReference>
<dbReference type="InterPro" id="IPR033964">
    <property type="entry name" value="Aro_prenylTrfase"/>
</dbReference>
<dbReference type="InterPro" id="IPR017795">
    <property type="entry name" value="Aro_prenylTrfase_DMATS"/>
</dbReference>
<dbReference type="InterPro" id="IPR012148">
    <property type="entry name" value="DMATS-type_fun"/>
</dbReference>
<dbReference type="NCBIfam" id="TIGR03429">
    <property type="entry name" value="arom_pren_DMATS"/>
    <property type="match status" value="1"/>
</dbReference>
<dbReference type="PANTHER" id="PTHR40627">
    <property type="entry name" value="INDOLE PRENYLTRANSFERASE TDIB-RELATED"/>
    <property type="match status" value="1"/>
</dbReference>
<dbReference type="PANTHER" id="PTHR40627:SF4">
    <property type="entry name" value="PRENYLTRANSFERASE ASQH1-RELATED"/>
    <property type="match status" value="1"/>
</dbReference>
<dbReference type="Pfam" id="PF11991">
    <property type="entry name" value="Trp_DMAT"/>
    <property type="match status" value="1"/>
</dbReference>
<dbReference type="PIRSF" id="PIRSF000509">
    <property type="entry name" value="Trp_DMAT"/>
    <property type="match status" value="1"/>
</dbReference>
<dbReference type="SFLD" id="SFLDS00036">
    <property type="entry name" value="Aromatic_Prenyltransferase"/>
    <property type="match status" value="1"/>
</dbReference>
<dbReference type="SFLD" id="SFLDG01162">
    <property type="entry name" value="I"/>
    <property type="match status" value="1"/>
</dbReference>
<comment type="function">
    <text evidence="2 5">DMATS-type prenyltransferase; part of the fragmented gene cluster that mediates the biosynthesis of fusarochromene, a tryptophan-derived metabolite closely related to a group of mycotoxins including fusarochromanone (PubMed:33107888). Within the pathway, fscG catalyzes the prenylation of the primary alcohol produced by fscA which is necessary for the formation of the chromene ring by the oxidoreductase fscI (Probable). The first step of the pathway is the epimerization of L-tryptophan to D-tryptophan in the presence of the NRPS-like tryptophan epimerase fscC. D-tryptophan is subsequently hydroxylated by the tryptophan 6-hydroxylase fscE to yield 6-hydroxytryptophan. The pyrrole ring undergoes cleavaged by the tryptophan 2,3-dioxygenase fscD and is finally converted to 4-hydroxykyrunenine by the hydrolase fscH. The NRPS-like oxidoreductase fscA reduces the carboxyl group to primary alcohol and the DMATS-type prenyltransferase fscG performs prenylation, followed by the formation of a chromene ring catalyzed by the oxidoreductase fscI, which leads to desacetylfusarochromene. Epoxidation by fscF and rearrangement reactions of chromene double bonds convert compound desacetylfusarochromene to fusarochromanones. Although specific acetyltransferases were not found near the fsc gene cluster, several predicted enzymes containing the N-acetyltransferase superfamily domain are present in the genome of F.equiseti. These predicted enzymes may have the potential to convert desacetylfusarochromene to fusarochromene (Probable).</text>
</comment>
<comment type="pathway">
    <text evidence="5">Secondary metabolite biosynthesis.</text>
</comment>
<comment type="similarity">
    <text evidence="4">Belongs to the tryptophan dimethylallyltransferase family.</text>
</comment>
<gene>
    <name evidence="3" type="primary">fscG</name>
</gene>
<name>FSCG_FUSEQ</name>
<feature type="chain" id="PRO_0000461415" description="DMATS-type prenyltransferase fscG">
    <location>
        <begin position="1"/>
        <end position="435"/>
    </location>
</feature>
<feature type="binding site" evidence="1">
    <location>
        <position position="111"/>
    </location>
    <ligand>
        <name>dimethylallyl diphosphate</name>
        <dbReference type="ChEBI" id="CHEBI:57623"/>
    </ligand>
</feature>
<feature type="binding site" evidence="1">
    <location>
        <position position="193"/>
    </location>
    <ligand>
        <name>dimethylallyl diphosphate</name>
        <dbReference type="ChEBI" id="CHEBI:57623"/>
    </ligand>
</feature>
<feature type="binding site" evidence="1">
    <location>
        <position position="195"/>
    </location>
    <ligand>
        <name>dimethylallyl diphosphate</name>
        <dbReference type="ChEBI" id="CHEBI:57623"/>
    </ligand>
</feature>
<feature type="binding site" evidence="1">
    <location>
        <position position="259"/>
    </location>
    <ligand>
        <name>dimethylallyl diphosphate</name>
        <dbReference type="ChEBI" id="CHEBI:57623"/>
    </ligand>
</feature>
<feature type="binding site" evidence="1">
    <location>
        <position position="261"/>
    </location>
    <ligand>
        <name>dimethylallyl diphosphate</name>
        <dbReference type="ChEBI" id="CHEBI:57623"/>
    </ligand>
</feature>
<feature type="binding site" evidence="1">
    <location>
        <position position="263"/>
    </location>
    <ligand>
        <name>dimethylallyl diphosphate</name>
        <dbReference type="ChEBI" id="CHEBI:57623"/>
    </ligand>
</feature>
<feature type="binding site" evidence="1">
    <location>
        <position position="352"/>
    </location>
    <ligand>
        <name>dimethylallyl diphosphate</name>
        <dbReference type="ChEBI" id="CHEBI:57623"/>
    </ligand>
</feature>
<feature type="binding site" evidence="1">
    <location>
        <position position="423"/>
    </location>
    <ligand>
        <name>dimethylallyl diphosphate</name>
        <dbReference type="ChEBI" id="CHEBI:57623"/>
    </ligand>
</feature>
<protein>
    <recommendedName>
        <fullName evidence="3">DMATS-type prenyltransferase fscG</fullName>
        <ecNumber evidence="5">2.5.1.-</ecNumber>
    </recommendedName>
    <alternativeName>
        <fullName evidence="3">Fusarochromene biosynthesis cluster protein G</fullName>
    </alternativeName>
</protein>
<accession>A0A823A8X6</accession>
<proteinExistence type="inferred from homology"/>
<evidence type="ECO:0000250" key="1">
    <source>
        <dbReference type="UniProtKB" id="Q4WAW7"/>
    </source>
</evidence>
<evidence type="ECO:0000269" key="2">
    <source>
    </source>
</evidence>
<evidence type="ECO:0000303" key="3">
    <source>
    </source>
</evidence>
<evidence type="ECO:0000305" key="4"/>
<evidence type="ECO:0000305" key="5">
    <source>
    </source>
</evidence>
<keyword id="KW-0637">Prenyltransferase</keyword>
<keyword id="KW-0808">Transferase</keyword>
<organism>
    <name type="scientific">Fusarium equiseti</name>
    <name type="common">Fusarium scirpi</name>
    <dbReference type="NCBI Taxonomy" id="61235"/>
    <lineage>
        <taxon>Eukaryota</taxon>
        <taxon>Fungi</taxon>
        <taxon>Dikarya</taxon>
        <taxon>Ascomycota</taxon>
        <taxon>Pezizomycotina</taxon>
        <taxon>Sordariomycetes</taxon>
        <taxon>Hypocreomycetidae</taxon>
        <taxon>Hypocreales</taxon>
        <taxon>Nectriaceae</taxon>
        <taxon>Fusarium</taxon>
        <taxon>Fusarium incarnatum-equiseti species complex</taxon>
    </lineage>
</organism>
<reference key="1">
    <citation type="journal article" date="2021" name="Org. Biomol. Chem.">
        <title>Fusarochromene, a novel tryptophan-derived metabolite from Fusarium sacchari.</title>
        <authorList>
            <person name="Marshall J.W."/>
            <person name="de Mattos-Shipley K.M.J."/>
            <person name="Ghannam I.A.Y."/>
            <person name="Munawar A."/>
            <person name="Killen J.C."/>
            <person name="Lazarus C.M."/>
            <person name="Cox R.J."/>
            <person name="Willis C.L."/>
            <person name="Simpson T.J."/>
        </authorList>
    </citation>
    <scope>NUCLEOTIDE SEQUENCE [GENOMIC DNA]</scope>
    <scope>FUNCTION</scope>
    <scope>PATHWAY</scope>
</reference>